<dbReference type="EMBL" id="AB008269">
    <property type="protein sequence ID" value="BAB10644.1"/>
    <property type="molecule type" value="Genomic_DNA"/>
</dbReference>
<dbReference type="EMBL" id="CP002688">
    <property type="protein sequence ID" value="AED97402.1"/>
    <property type="molecule type" value="Genomic_DNA"/>
</dbReference>
<dbReference type="EMBL" id="BT010831">
    <property type="protein sequence ID" value="AAR24198.1"/>
    <property type="molecule type" value="mRNA"/>
</dbReference>
<dbReference type="EMBL" id="BT011296">
    <property type="protein sequence ID" value="AAR92332.1"/>
    <property type="molecule type" value="mRNA"/>
</dbReference>
<dbReference type="RefSeq" id="NP_200903.1">
    <property type="nucleotide sequence ID" value="NM_125488.5"/>
</dbReference>
<dbReference type="FunCoup" id="Q9FME5">
    <property type="interactions" value="2"/>
</dbReference>
<dbReference type="STRING" id="3702.Q9FME5"/>
<dbReference type="GlyCosmos" id="Q9FME5">
    <property type="glycosylation" value="2 sites, No reported glycans"/>
</dbReference>
<dbReference type="GlyGen" id="Q9FME5">
    <property type="glycosylation" value="2 sites"/>
</dbReference>
<dbReference type="PaxDb" id="3702-AT5G60950.1"/>
<dbReference type="ProteomicsDB" id="241055"/>
<dbReference type="EnsemblPlants" id="AT5G60950.1">
    <property type="protein sequence ID" value="AT5G60950.1"/>
    <property type="gene ID" value="AT5G60950"/>
</dbReference>
<dbReference type="GeneID" id="836216"/>
<dbReference type="Gramene" id="AT5G60950.1">
    <property type="protein sequence ID" value="AT5G60950.1"/>
    <property type="gene ID" value="AT5G60950"/>
</dbReference>
<dbReference type="KEGG" id="ath:AT5G60950"/>
<dbReference type="Araport" id="AT5G60950"/>
<dbReference type="TAIR" id="AT5G60950">
    <property type="gene designation" value="COBL5"/>
</dbReference>
<dbReference type="eggNOG" id="ENOG502QTGW">
    <property type="taxonomic scope" value="Eukaryota"/>
</dbReference>
<dbReference type="HOGENOM" id="CLU_038120_2_0_1"/>
<dbReference type="InParanoid" id="Q9FME5"/>
<dbReference type="OMA" id="PANFMFT"/>
<dbReference type="PhylomeDB" id="Q9FME5"/>
<dbReference type="CD-CODE" id="4299E36E">
    <property type="entry name" value="Nucleolus"/>
</dbReference>
<dbReference type="PRO" id="PR:Q9FME5"/>
<dbReference type="Proteomes" id="UP000006548">
    <property type="component" value="Chromosome 5"/>
</dbReference>
<dbReference type="ExpressionAtlas" id="Q9FME5">
    <property type="expression patterns" value="baseline and differential"/>
</dbReference>
<dbReference type="GO" id="GO:0016020">
    <property type="term" value="C:membrane"/>
    <property type="evidence" value="ECO:0007669"/>
    <property type="project" value="InterPro"/>
</dbReference>
<dbReference type="GO" id="GO:0010215">
    <property type="term" value="P:cellulose microfibril organization"/>
    <property type="evidence" value="ECO:0007669"/>
    <property type="project" value="InterPro"/>
</dbReference>
<dbReference type="GO" id="GO:0002239">
    <property type="term" value="P:response to oomycetes"/>
    <property type="evidence" value="ECO:0000270"/>
    <property type="project" value="TAIR"/>
</dbReference>
<dbReference type="InterPro" id="IPR006918">
    <property type="entry name" value="COBRA_pln"/>
</dbReference>
<dbReference type="PANTHER" id="PTHR31673:SF39">
    <property type="entry name" value="COBRA-LIKE PROTEIN 5"/>
    <property type="match status" value="1"/>
</dbReference>
<dbReference type="PANTHER" id="PTHR31673">
    <property type="entry name" value="PROTEIN COBRA"/>
    <property type="match status" value="1"/>
</dbReference>
<dbReference type="Pfam" id="PF04833">
    <property type="entry name" value="COBRA"/>
    <property type="match status" value="1"/>
</dbReference>
<comment type="tissue specificity">
    <text evidence="2">Expressed in roots, stems, leaves, flowers and siliques.</text>
</comment>
<comment type="miscellaneous">
    <text>COBL5 appears to be a truncated member of the COBRA family due to an in-frame mutation that introduces a stop codon. This truncated gene is actively transcribed.</text>
</comment>
<comment type="similarity">
    <text evidence="3">Belongs to the COBRA family.</text>
</comment>
<protein>
    <recommendedName>
        <fullName>COBRA-like protein 5</fullName>
    </recommendedName>
</protein>
<keyword id="KW-0325">Glycoprotein</keyword>
<keyword id="KW-1185">Reference proteome</keyword>
<keyword id="KW-0732">Signal</keyword>
<reference key="1">
    <citation type="journal article" date="1997" name="DNA Res.">
        <title>Structural analysis of Arabidopsis thaliana chromosome 5. III. Sequence features of the regions of 1,191,918 bp covered by seventeen physically assigned P1 clones.</title>
        <authorList>
            <person name="Nakamura Y."/>
            <person name="Sato S."/>
            <person name="Kaneko T."/>
            <person name="Kotani H."/>
            <person name="Asamizu E."/>
            <person name="Miyajima N."/>
            <person name="Tabata S."/>
        </authorList>
    </citation>
    <scope>NUCLEOTIDE SEQUENCE [LARGE SCALE GENOMIC DNA]</scope>
    <source>
        <strain>cv. Columbia</strain>
    </source>
</reference>
<reference key="2">
    <citation type="journal article" date="2017" name="Plant J.">
        <title>Araport11: a complete reannotation of the Arabidopsis thaliana reference genome.</title>
        <authorList>
            <person name="Cheng C.Y."/>
            <person name="Krishnakumar V."/>
            <person name="Chan A.P."/>
            <person name="Thibaud-Nissen F."/>
            <person name="Schobel S."/>
            <person name="Town C.D."/>
        </authorList>
    </citation>
    <scope>GENOME REANNOTATION</scope>
    <source>
        <strain>cv. Columbia</strain>
    </source>
</reference>
<reference key="3">
    <citation type="submission" date="2004-01" db="EMBL/GenBank/DDBJ databases">
        <title>Arabidopsis ORF clones.</title>
        <authorList>
            <person name="Cheuk R.F."/>
            <person name="Chen H."/>
            <person name="Kim C.J."/>
            <person name="Shinn P."/>
            <person name="Ecker J.R."/>
        </authorList>
    </citation>
    <scope>NUCLEOTIDE SEQUENCE [LARGE SCALE MRNA]</scope>
    <source>
        <strain>cv. Columbia</strain>
    </source>
</reference>
<reference key="4">
    <citation type="journal article" date="2002" name="Plant Physiol.">
        <title>The COBRA family of putative GPI-anchored proteins in Arabidopsis. A new fellowship in expansion.</title>
        <authorList>
            <person name="Roudier F."/>
            <person name="Schindelman G."/>
            <person name="DeSalle R."/>
            <person name="Benfey P.N."/>
        </authorList>
    </citation>
    <scope>TISSUE SPECIFICITY</scope>
</reference>
<proteinExistence type="evidence at transcript level"/>
<name>COBL5_ARATH</name>
<gene>
    <name type="primary">COBL5</name>
    <name type="ordered locus">At5g60950</name>
    <name type="ORF">MSL3.7</name>
</gene>
<feature type="signal peptide" evidence="1">
    <location>
        <begin position="1"/>
        <end position="24"/>
    </location>
</feature>
<feature type="chain" id="PRO_0000005578" description="COBRA-like protein 5">
    <location>
        <begin position="25"/>
        <end position="204"/>
    </location>
</feature>
<feature type="glycosylation site" description="N-linked (GlcNAc...) asparagine" evidence="1">
    <location>
        <position position="31"/>
    </location>
</feature>
<feature type="glycosylation site" description="N-linked (GlcNAc...) asparagine" evidence="1">
    <location>
        <position position="195"/>
    </location>
</feature>
<sequence>MESLFSTMIVLLLVSFSCLISTEALTSNYGNITVKWDLLNWTPDGYVAVVTAYNYQKQRSIPGWKMSWRGTKKEVIWNMLGAKTTGQGGCSMFKGNIPQSCVRKPTVVDLLPGTPFNQQIANCCKSGVLKPGSESAFQLSVGSAGNSVKTARMPANFMFTAPKQQYICGPSKNVRPTRFTTADKRRITAALMTWNITCVFHKAT</sequence>
<organism>
    <name type="scientific">Arabidopsis thaliana</name>
    <name type="common">Mouse-ear cress</name>
    <dbReference type="NCBI Taxonomy" id="3702"/>
    <lineage>
        <taxon>Eukaryota</taxon>
        <taxon>Viridiplantae</taxon>
        <taxon>Streptophyta</taxon>
        <taxon>Embryophyta</taxon>
        <taxon>Tracheophyta</taxon>
        <taxon>Spermatophyta</taxon>
        <taxon>Magnoliopsida</taxon>
        <taxon>eudicotyledons</taxon>
        <taxon>Gunneridae</taxon>
        <taxon>Pentapetalae</taxon>
        <taxon>rosids</taxon>
        <taxon>malvids</taxon>
        <taxon>Brassicales</taxon>
        <taxon>Brassicaceae</taxon>
        <taxon>Camelineae</taxon>
        <taxon>Arabidopsis</taxon>
    </lineage>
</organism>
<accession>Q9FME5</accession>
<accession>Q6IDL3</accession>
<evidence type="ECO:0000255" key="1"/>
<evidence type="ECO:0000269" key="2">
    <source>
    </source>
</evidence>
<evidence type="ECO:0000305" key="3"/>